<name>LPTE_YERP3</name>
<accession>A7FKW1</accession>
<comment type="function">
    <text evidence="1">Together with LptD, is involved in the assembly of lipopolysaccharide (LPS) at the surface of the outer membrane. Required for the proper assembly of LptD. Binds LPS and may serve as the LPS recognition site at the outer membrane.</text>
</comment>
<comment type="subunit">
    <text evidence="1">Component of the lipopolysaccharide transport and assembly complex. Interacts with LptD.</text>
</comment>
<comment type="subcellular location">
    <subcellularLocation>
        <location evidence="1">Cell outer membrane</location>
        <topology evidence="1">Lipid-anchor</topology>
    </subcellularLocation>
</comment>
<comment type="similarity">
    <text evidence="1">Belongs to the LptE lipoprotein family.</text>
</comment>
<gene>
    <name evidence="1" type="primary">lptE</name>
    <name type="synonym">rlpB</name>
    <name type="ordered locus">YpsIP31758_2927</name>
</gene>
<reference key="1">
    <citation type="journal article" date="2007" name="PLoS Genet.">
        <title>The complete genome sequence of Yersinia pseudotuberculosis IP31758, the causative agent of Far East scarlet-like fever.</title>
        <authorList>
            <person name="Eppinger M."/>
            <person name="Rosovitz M.J."/>
            <person name="Fricke W.F."/>
            <person name="Rasko D.A."/>
            <person name="Kokorina G."/>
            <person name="Fayolle C."/>
            <person name="Lindler L.E."/>
            <person name="Carniel E."/>
            <person name="Ravel J."/>
        </authorList>
    </citation>
    <scope>NUCLEOTIDE SEQUENCE [LARGE SCALE GENOMIC DNA]</scope>
    <source>
        <strain>IP 31758</strain>
    </source>
</reference>
<organism>
    <name type="scientific">Yersinia pseudotuberculosis serotype O:1b (strain IP 31758)</name>
    <dbReference type="NCBI Taxonomy" id="349747"/>
    <lineage>
        <taxon>Bacteria</taxon>
        <taxon>Pseudomonadati</taxon>
        <taxon>Pseudomonadota</taxon>
        <taxon>Gammaproteobacteria</taxon>
        <taxon>Enterobacterales</taxon>
        <taxon>Yersiniaceae</taxon>
        <taxon>Yersinia</taxon>
    </lineage>
</organism>
<keyword id="KW-0998">Cell outer membrane</keyword>
<keyword id="KW-0449">Lipoprotein</keyword>
<keyword id="KW-0472">Membrane</keyword>
<keyword id="KW-0564">Palmitate</keyword>
<keyword id="KW-0732">Signal</keyword>
<proteinExistence type="inferred from homology"/>
<protein>
    <recommendedName>
        <fullName evidence="1">LPS-assembly lipoprotein LptE</fullName>
    </recommendedName>
</protein>
<dbReference type="EMBL" id="CP000720">
    <property type="protein sequence ID" value="ABS47449.1"/>
    <property type="molecule type" value="Genomic_DNA"/>
</dbReference>
<dbReference type="RefSeq" id="WP_002210332.1">
    <property type="nucleotide sequence ID" value="NC_009708.1"/>
</dbReference>
<dbReference type="SMR" id="A7FKW1"/>
<dbReference type="GeneID" id="57976086"/>
<dbReference type="KEGG" id="ypi:YpsIP31758_2927"/>
<dbReference type="HOGENOM" id="CLU_103309_1_1_6"/>
<dbReference type="Proteomes" id="UP000002412">
    <property type="component" value="Chromosome"/>
</dbReference>
<dbReference type="GO" id="GO:0009279">
    <property type="term" value="C:cell outer membrane"/>
    <property type="evidence" value="ECO:0007669"/>
    <property type="project" value="UniProtKB-SubCell"/>
</dbReference>
<dbReference type="GO" id="GO:1990351">
    <property type="term" value="C:transporter complex"/>
    <property type="evidence" value="ECO:0007669"/>
    <property type="project" value="TreeGrafter"/>
</dbReference>
<dbReference type="GO" id="GO:0001530">
    <property type="term" value="F:lipopolysaccharide binding"/>
    <property type="evidence" value="ECO:0007669"/>
    <property type="project" value="TreeGrafter"/>
</dbReference>
<dbReference type="GO" id="GO:0043165">
    <property type="term" value="P:Gram-negative-bacterium-type cell outer membrane assembly"/>
    <property type="evidence" value="ECO:0007669"/>
    <property type="project" value="UniProtKB-UniRule"/>
</dbReference>
<dbReference type="GO" id="GO:0015920">
    <property type="term" value="P:lipopolysaccharide transport"/>
    <property type="evidence" value="ECO:0007669"/>
    <property type="project" value="TreeGrafter"/>
</dbReference>
<dbReference type="Gene3D" id="3.30.160.150">
    <property type="entry name" value="Lipoprotein like domain"/>
    <property type="match status" value="1"/>
</dbReference>
<dbReference type="HAMAP" id="MF_01186">
    <property type="entry name" value="LPS_assembly_LptE"/>
    <property type="match status" value="1"/>
</dbReference>
<dbReference type="InterPro" id="IPR007485">
    <property type="entry name" value="LPS_assembly_LptE"/>
</dbReference>
<dbReference type="NCBIfam" id="NF008062">
    <property type="entry name" value="PRK10796.1"/>
    <property type="match status" value="1"/>
</dbReference>
<dbReference type="PANTHER" id="PTHR38098">
    <property type="entry name" value="LPS-ASSEMBLY LIPOPROTEIN LPTE"/>
    <property type="match status" value="1"/>
</dbReference>
<dbReference type="PANTHER" id="PTHR38098:SF1">
    <property type="entry name" value="LPS-ASSEMBLY LIPOPROTEIN LPTE"/>
    <property type="match status" value="1"/>
</dbReference>
<dbReference type="Pfam" id="PF04390">
    <property type="entry name" value="LptE"/>
    <property type="match status" value="1"/>
</dbReference>
<dbReference type="PROSITE" id="PS51257">
    <property type="entry name" value="PROKAR_LIPOPROTEIN"/>
    <property type="match status" value="1"/>
</dbReference>
<evidence type="ECO:0000255" key="1">
    <source>
        <dbReference type="HAMAP-Rule" id="MF_01186"/>
    </source>
</evidence>
<evidence type="ECO:0000256" key="2">
    <source>
        <dbReference type="SAM" id="MobiDB-lite"/>
    </source>
</evidence>
<sequence>MRHRILTLLLGLAVLVTAGCGFNLRGTTQVPTELQKLLLESSDPYGPLARSIRQQLRLNNVTIVDDAMRKDIPTLRIIGSSESQETVSIFRNGVAAENQLVLHVQAQVLIPGHDIYPLQVNVFRTFFDNPLTALAKEAEAEVLRQEMREQAAQQLVRQLLTVHAAEVKNTQKNGDKPVSDANAAQGSTPTAVNETTLGEPAVSTSAK</sequence>
<feature type="signal peptide" evidence="1">
    <location>
        <begin position="1"/>
        <end position="19"/>
    </location>
</feature>
<feature type="chain" id="PRO_1000065828" description="LPS-assembly lipoprotein LptE">
    <location>
        <begin position="20"/>
        <end position="207"/>
    </location>
</feature>
<feature type="region of interest" description="Disordered" evidence="2">
    <location>
        <begin position="168"/>
        <end position="207"/>
    </location>
</feature>
<feature type="compositionally biased region" description="Polar residues" evidence="2">
    <location>
        <begin position="182"/>
        <end position="207"/>
    </location>
</feature>
<feature type="lipid moiety-binding region" description="N-palmitoyl cysteine" evidence="1">
    <location>
        <position position="20"/>
    </location>
</feature>
<feature type="lipid moiety-binding region" description="S-diacylglycerol cysteine" evidence="1">
    <location>
        <position position="20"/>
    </location>
</feature>